<proteinExistence type="inferred from homology"/>
<accession>Q9L291</accession>
<protein>
    <recommendedName>
        <fullName evidence="1">Holliday junction branch migration complex subunit RuvB</fullName>
        <ecNumber evidence="1">3.6.4.-</ecNumber>
    </recommendedName>
</protein>
<keyword id="KW-0067">ATP-binding</keyword>
<keyword id="KW-0963">Cytoplasm</keyword>
<keyword id="KW-0227">DNA damage</keyword>
<keyword id="KW-0233">DNA recombination</keyword>
<keyword id="KW-0234">DNA repair</keyword>
<keyword id="KW-0238">DNA-binding</keyword>
<keyword id="KW-0378">Hydrolase</keyword>
<keyword id="KW-0547">Nucleotide-binding</keyword>
<keyword id="KW-1185">Reference proteome</keyword>
<comment type="function">
    <text evidence="1">The RuvA-RuvB-RuvC complex processes Holliday junction (HJ) DNA during genetic recombination and DNA repair, while the RuvA-RuvB complex plays an important role in the rescue of blocked DNA replication forks via replication fork reversal (RFR). RuvA specifically binds to HJ cruciform DNA, conferring on it an open structure. The RuvB hexamer acts as an ATP-dependent pump, pulling dsDNA into and through the RuvAB complex. RuvB forms 2 homohexamers on either side of HJ DNA bound by 1 or 2 RuvA tetramers; 4 subunits per hexamer contact DNA at a time. Coordinated motions by a converter formed by DNA-disengaged RuvB subunits stimulates ATP hydrolysis and nucleotide exchange. Immobilization of the converter enables RuvB to convert the ATP-contained energy into a lever motion, pulling 2 nucleotides of DNA out of the RuvA tetramer per ATP hydrolyzed, thus driving DNA branch migration. The RuvB motors rotate together with the DNA substrate, which together with the progressing nucleotide cycle form the mechanistic basis for DNA recombination by continuous HJ branch migration. Branch migration allows RuvC to scan DNA until it finds its consensus sequence, where it cleaves and resolves cruciform DNA.</text>
</comment>
<comment type="catalytic activity">
    <reaction evidence="1">
        <text>ATP + H2O = ADP + phosphate + H(+)</text>
        <dbReference type="Rhea" id="RHEA:13065"/>
        <dbReference type="ChEBI" id="CHEBI:15377"/>
        <dbReference type="ChEBI" id="CHEBI:15378"/>
        <dbReference type="ChEBI" id="CHEBI:30616"/>
        <dbReference type="ChEBI" id="CHEBI:43474"/>
        <dbReference type="ChEBI" id="CHEBI:456216"/>
    </reaction>
</comment>
<comment type="subunit">
    <text evidence="1">Homohexamer. Forms an RuvA(8)-RuvB(12)-Holliday junction (HJ) complex. HJ DNA is sandwiched between 2 RuvA tetramers; dsDNA enters through RuvA and exits via RuvB. An RuvB hexamer assembles on each DNA strand where it exits the tetramer. Each RuvB hexamer is contacted by two RuvA subunits (via domain III) on 2 adjacent RuvB subunits; this complex drives branch migration. In the full resolvosome a probable DNA-RuvA(4)-RuvB(12)-RuvC(2) complex forms which resolves the HJ.</text>
</comment>
<comment type="subcellular location">
    <subcellularLocation>
        <location evidence="1">Cytoplasm</location>
    </subcellularLocation>
</comment>
<comment type="domain">
    <text evidence="1">Has 3 domains, the large (RuvB-L) and small ATPase (RuvB-S) domains and the C-terminal head (RuvB-H) domain. The head domain binds DNA, while the ATPase domains jointly bind ATP, ADP or are empty depending on the state of the subunit in the translocation cycle. During a single DNA translocation step the structure of each domain remains the same, but their relative positions change.</text>
</comment>
<comment type="similarity">
    <text evidence="1">Belongs to the RuvB family.</text>
</comment>
<reference key="1">
    <citation type="journal article" date="2002" name="Nature">
        <title>Complete genome sequence of the model actinomycete Streptomyces coelicolor A3(2).</title>
        <authorList>
            <person name="Bentley S.D."/>
            <person name="Chater K.F."/>
            <person name="Cerdeno-Tarraga A.-M."/>
            <person name="Challis G.L."/>
            <person name="Thomson N.R."/>
            <person name="James K.D."/>
            <person name="Harris D.E."/>
            <person name="Quail M.A."/>
            <person name="Kieser H."/>
            <person name="Harper D."/>
            <person name="Bateman A."/>
            <person name="Brown S."/>
            <person name="Chandra G."/>
            <person name="Chen C.W."/>
            <person name="Collins M."/>
            <person name="Cronin A."/>
            <person name="Fraser A."/>
            <person name="Goble A."/>
            <person name="Hidalgo J."/>
            <person name="Hornsby T."/>
            <person name="Howarth S."/>
            <person name="Huang C.-H."/>
            <person name="Kieser T."/>
            <person name="Larke L."/>
            <person name="Murphy L.D."/>
            <person name="Oliver K."/>
            <person name="O'Neil S."/>
            <person name="Rabbinowitsch E."/>
            <person name="Rajandream M.A."/>
            <person name="Rutherford K.M."/>
            <person name="Rutter S."/>
            <person name="Seeger K."/>
            <person name="Saunders D."/>
            <person name="Sharp S."/>
            <person name="Squares R."/>
            <person name="Squares S."/>
            <person name="Taylor K."/>
            <person name="Warren T."/>
            <person name="Wietzorrek A."/>
            <person name="Woodward J.R."/>
            <person name="Barrell B.G."/>
            <person name="Parkhill J."/>
            <person name="Hopwood D.A."/>
        </authorList>
    </citation>
    <scope>NUCLEOTIDE SEQUENCE [LARGE SCALE GENOMIC DNA]</scope>
    <source>
        <strain>ATCC BAA-471 / A3(2) / M145</strain>
    </source>
</reference>
<organism>
    <name type="scientific">Streptomyces coelicolor (strain ATCC BAA-471 / A3(2) / M145)</name>
    <dbReference type="NCBI Taxonomy" id="100226"/>
    <lineage>
        <taxon>Bacteria</taxon>
        <taxon>Bacillati</taxon>
        <taxon>Actinomycetota</taxon>
        <taxon>Actinomycetes</taxon>
        <taxon>Kitasatosporales</taxon>
        <taxon>Streptomycetaceae</taxon>
        <taxon>Streptomyces</taxon>
        <taxon>Streptomyces albidoflavus group</taxon>
    </lineage>
</organism>
<sequence length="357" mass="37973">MNWDDTTDAEAAAERLVGAAADGEDQAVEAALRPKDLGEFIGQEKVREQLDLVLRAARARGATADHVLLSGAPGLGKTTLSMIIAAEMEAPIRITSGPAIQHAGDLAAILSSLQEGEVLFLDEIHRMSRPAEEMLYMAMEDFRVDVIVGKGPGATAIPLELPPFTLVGATTRAGLLPPPLRDRFGFTAHMEFYGPAELERVIHRSAGLLDVEIDPTGAAEIAGRSRGTPRIANRLLRRVRDYAQVKADGLITQEIAAAALAVYEVDARGLDRLDRGVLEALLKLFGGGPVGLSTLAVAVGEERETVEEVAEPFLVREGLLARTPRGRVATPAAWAHLGLTPPRPQSSGNGQPDLFGA</sequence>
<gene>
    <name evidence="1" type="primary">ruvB</name>
    <name type="ordered locus">SCO1518</name>
    <name type="ORF">SCL2.08c</name>
</gene>
<name>RUVB_STRCO</name>
<dbReference type="EC" id="3.6.4.-" evidence="1"/>
<dbReference type="EMBL" id="AL939109">
    <property type="protein sequence ID" value="CAB70920.1"/>
    <property type="molecule type" value="Genomic_DNA"/>
</dbReference>
<dbReference type="RefSeq" id="NP_625797.1">
    <property type="nucleotide sequence ID" value="NC_003888.3"/>
</dbReference>
<dbReference type="RefSeq" id="WP_003977309.1">
    <property type="nucleotide sequence ID" value="NZ_VNID01000021.1"/>
</dbReference>
<dbReference type="SMR" id="Q9L291"/>
<dbReference type="FunCoup" id="Q9L291">
    <property type="interactions" value="73"/>
</dbReference>
<dbReference type="STRING" id="100226.gene:17759104"/>
<dbReference type="PaxDb" id="100226-SCO1518"/>
<dbReference type="GeneID" id="91387515"/>
<dbReference type="KEGG" id="sco:SCO1518"/>
<dbReference type="PATRIC" id="fig|100226.15.peg.1527"/>
<dbReference type="eggNOG" id="COG2255">
    <property type="taxonomic scope" value="Bacteria"/>
</dbReference>
<dbReference type="HOGENOM" id="CLU_055599_1_0_11"/>
<dbReference type="InParanoid" id="Q9L291"/>
<dbReference type="OrthoDB" id="9804478at2"/>
<dbReference type="PhylomeDB" id="Q9L291"/>
<dbReference type="Proteomes" id="UP000001973">
    <property type="component" value="Chromosome"/>
</dbReference>
<dbReference type="GO" id="GO:0005737">
    <property type="term" value="C:cytoplasm"/>
    <property type="evidence" value="ECO:0007669"/>
    <property type="project" value="UniProtKB-SubCell"/>
</dbReference>
<dbReference type="GO" id="GO:0048476">
    <property type="term" value="C:Holliday junction resolvase complex"/>
    <property type="evidence" value="ECO:0007669"/>
    <property type="project" value="UniProtKB-UniRule"/>
</dbReference>
<dbReference type="GO" id="GO:0005524">
    <property type="term" value="F:ATP binding"/>
    <property type="evidence" value="ECO:0007669"/>
    <property type="project" value="UniProtKB-UniRule"/>
</dbReference>
<dbReference type="GO" id="GO:0016887">
    <property type="term" value="F:ATP hydrolysis activity"/>
    <property type="evidence" value="ECO:0007669"/>
    <property type="project" value="InterPro"/>
</dbReference>
<dbReference type="GO" id="GO:0000400">
    <property type="term" value="F:four-way junction DNA binding"/>
    <property type="evidence" value="ECO:0007669"/>
    <property type="project" value="UniProtKB-UniRule"/>
</dbReference>
<dbReference type="GO" id="GO:0009378">
    <property type="term" value="F:four-way junction helicase activity"/>
    <property type="evidence" value="ECO:0007669"/>
    <property type="project" value="InterPro"/>
</dbReference>
<dbReference type="GO" id="GO:0006310">
    <property type="term" value="P:DNA recombination"/>
    <property type="evidence" value="ECO:0007669"/>
    <property type="project" value="UniProtKB-UniRule"/>
</dbReference>
<dbReference type="GO" id="GO:0006281">
    <property type="term" value="P:DNA repair"/>
    <property type="evidence" value="ECO:0007669"/>
    <property type="project" value="UniProtKB-UniRule"/>
</dbReference>
<dbReference type="CDD" id="cd00009">
    <property type="entry name" value="AAA"/>
    <property type="match status" value="1"/>
</dbReference>
<dbReference type="Gene3D" id="1.10.8.60">
    <property type="match status" value="1"/>
</dbReference>
<dbReference type="Gene3D" id="3.40.50.300">
    <property type="entry name" value="P-loop containing nucleotide triphosphate hydrolases"/>
    <property type="match status" value="1"/>
</dbReference>
<dbReference type="Gene3D" id="1.10.10.10">
    <property type="entry name" value="Winged helix-like DNA-binding domain superfamily/Winged helix DNA-binding domain"/>
    <property type="match status" value="1"/>
</dbReference>
<dbReference type="HAMAP" id="MF_00016">
    <property type="entry name" value="DNA_HJ_migration_RuvB"/>
    <property type="match status" value="1"/>
</dbReference>
<dbReference type="InterPro" id="IPR003593">
    <property type="entry name" value="AAA+_ATPase"/>
</dbReference>
<dbReference type="InterPro" id="IPR041445">
    <property type="entry name" value="AAA_lid_4"/>
</dbReference>
<dbReference type="InterPro" id="IPR004605">
    <property type="entry name" value="DNA_helicase_Holl-junc_RuvB"/>
</dbReference>
<dbReference type="InterPro" id="IPR027417">
    <property type="entry name" value="P-loop_NTPase"/>
</dbReference>
<dbReference type="InterPro" id="IPR008824">
    <property type="entry name" value="RuvB-like_N"/>
</dbReference>
<dbReference type="InterPro" id="IPR008823">
    <property type="entry name" value="RuvB_C"/>
</dbReference>
<dbReference type="InterPro" id="IPR036388">
    <property type="entry name" value="WH-like_DNA-bd_sf"/>
</dbReference>
<dbReference type="InterPro" id="IPR036390">
    <property type="entry name" value="WH_DNA-bd_sf"/>
</dbReference>
<dbReference type="NCBIfam" id="NF000868">
    <property type="entry name" value="PRK00080.1"/>
    <property type="match status" value="1"/>
</dbReference>
<dbReference type="NCBIfam" id="TIGR00635">
    <property type="entry name" value="ruvB"/>
    <property type="match status" value="1"/>
</dbReference>
<dbReference type="PANTHER" id="PTHR42848">
    <property type="match status" value="1"/>
</dbReference>
<dbReference type="PANTHER" id="PTHR42848:SF1">
    <property type="entry name" value="HOLLIDAY JUNCTION BRANCH MIGRATION COMPLEX SUBUNIT RUVB"/>
    <property type="match status" value="1"/>
</dbReference>
<dbReference type="Pfam" id="PF17864">
    <property type="entry name" value="AAA_lid_4"/>
    <property type="match status" value="1"/>
</dbReference>
<dbReference type="Pfam" id="PF05491">
    <property type="entry name" value="RuvB_C"/>
    <property type="match status" value="1"/>
</dbReference>
<dbReference type="Pfam" id="PF05496">
    <property type="entry name" value="RuvB_N"/>
    <property type="match status" value="1"/>
</dbReference>
<dbReference type="SMART" id="SM00382">
    <property type="entry name" value="AAA"/>
    <property type="match status" value="1"/>
</dbReference>
<dbReference type="SUPFAM" id="SSF52540">
    <property type="entry name" value="P-loop containing nucleoside triphosphate hydrolases"/>
    <property type="match status" value="1"/>
</dbReference>
<dbReference type="SUPFAM" id="SSF46785">
    <property type="entry name" value="Winged helix' DNA-binding domain"/>
    <property type="match status" value="1"/>
</dbReference>
<evidence type="ECO:0000255" key="1">
    <source>
        <dbReference type="HAMAP-Rule" id="MF_00016"/>
    </source>
</evidence>
<evidence type="ECO:0000256" key="2">
    <source>
        <dbReference type="SAM" id="MobiDB-lite"/>
    </source>
</evidence>
<feature type="chain" id="PRO_0000165605" description="Holliday junction branch migration complex subunit RuvB">
    <location>
        <begin position="1"/>
        <end position="357"/>
    </location>
</feature>
<feature type="region of interest" description="Large ATPase domain (RuvB-L)" evidence="1">
    <location>
        <begin position="3"/>
        <end position="193"/>
    </location>
</feature>
<feature type="region of interest" description="Small ATPAse domain (RuvB-S)" evidence="1">
    <location>
        <begin position="194"/>
        <end position="264"/>
    </location>
</feature>
<feature type="region of interest" description="Head domain (RuvB-H)" evidence="1">
    <location>
        <begin position="267"/>
        <end position="357"/>
    </location>
</feature>
<feature type="region of interest" description="Disordered" evidence="2">
    <location>
        <begin position="337"/>
        <end position="357"/>
    </location>
</feature>
<feature type="binding site" evidence="1">
    <location>
        <position position="32"/>
    </location>
    <ligand>
        <name>ATP</name>
        <dbReference type="ChEBI" id="CHEBI:30616"/>
    </ligand>
</feature>
<feature type="binding site" evidence="1">
    <location>
        <position position="33"/>
    </location>
    <ligand>
        <name>ATP</name>
        <dbReference type="ChEBI" id="CHEBI:30616"/>
    </ligand>
</feature>
<feature type="binding site" evidence="1">
    <location>
        <position position="74"/>
    </location>
    <ligand>
        <name>ATP</name>
        <dbReference type="ChEBI" id="CHEBI:30616"/>
    </ligand>
</feature>
<feature type="binding site" evidence="1">
    <location>
        <position position="77"/>
    </location>
    <ligand>
        <name>ATP</name>
        <dbReference type="ChEBI" id="CHEBI:30616"/>
    </ligand>
</feature>
<feature type="binding site" evidence="1">
    <location>
        <position position="78"/>
    </location>
    <ligand>
        <name>ATP</name>
        <dbReference type="ChEBI" id="CHEBI:30616"/>
    </ligand>
</feature>
<feature type="binding site" evidence="1">
    <location>
        <position position="78"/>
    </location>
    <ligand>
        <name>Mg(2+)</name>
        <dbReference type="ChEBI" id="CHEBI:18420"/>
    </ligand>
</feature>
<feature type="binding site" evidence="1">
    <location>
        <position position="79"/>
    </location>
    <ligand>
        <name>ATP</name>
        <dbReference type="ChEBI" id="CHEBI:30616"/>
    </ligand>
</feature>
<feature type="binding site" evidence="1">
    <location>
        <begin position="140"/>
        <end position="142"/>
    </location>
    <ligand>
        <name>ATP</name>
        <dbReference type="ChEBI" id="CHEBI:30616"/>
    </ligand>
</feature>
<feature type="binding site" evidence="1">
    <location>
        <position position="183"/>
    </location>
    <ligand>
        <name>ATP</name>
        <dbReference type="ChEBI" id="CHEBI:30616"/>
    </ligand>
</feature>
<feature type="binding site" evidence="1">
    <location>
        <position position="193"/>
    </location>
    <ligand>
        <name>ATP</name>
        <dbReference type="ChEBI" id="CHEBI:30616"/>
    </ligand>
</feature>
<feature type="binding site" evidence="1">
    <location>
        <position position="230"/>
    </location>
    <ligand>
        <name>ATP</name>
        <dbReference type="ChEBI" id="CHEBI:30616"/>
    </ligand>
</feature>
<feature type="binding site" evidence="1">
    <location>
        <position position="303"/>
    </location>
    <ligand>
        <name>DNA</name>
        <dbReference type="ChEBI" id="CHEBI:16991"/>
    </ligand>
</feature>
<feature type="binding site" evidence="1">
    <location>
        <position position="322"/>
    </location>
    <ligand>
        <name>DNA</name>
        <dbReference type="ChEBI" id="CHEBI:16991"/>
    </ligand>
</feature>
<feature type="binding site" evidence="1">
    <location>
        <position position="327"/>
    </location>
    <ligand>
        <name>DNA</name>
        <dbReference type="ChEBI" id="CHEBI:16991"/>
    </ligand>
</feature>